<gene>
    <name evidence="1" type="primary">rppH</name>
    <name evidence="1" type="synonym">nudH</name>
    <name type="ordered locus">SARI_04655</name>
</gene>
<comment type="function">
    <text evidence="1">Accelerates the degradation of transcripts by removing pyrophosphate from the 5'-end of triphosphorylated RNA, leading to a more labile monophosphorylated state that can stimulate subsequent ribonuclease cleavage.</text>
</comment>
<comment type="cofactor">
    <cofactor evidence="1">
        <name>a divalent metal cation</name>
        <dbReference type="ChEBI" id="CHEBI:60240"/>
    </cofactor>
</comment>
<comment type="similarity">
    <text evidence="1">Belongs to the Nudix hydrolase family. RppH subfamily.</text>
</comment>
<evidence type="ECO:0000255" key="1">
    <source>
        <dbReference type="HAMAP-Rule" id="MF_00298"/>
    </source>
</evidence>
<proteinExistence type="inferred from homology"/>
<protein>
    <recommendedName>
        <fullName evidence="1">RNA pyrophosphohydrolase</fullName>
        <ecNumber evidence="1">3.6.1.-</ecNumber>
    </recommendedName>
    <alternativeName>
        <fullName evidence="1">(Di)nucleoside polyphosphate hydrolase</fullName>
    </alternativeName>
</protein>
<reference key="1">
    <citation type="submission" date="2007-11" db="EMBL/GenBank/DDBJ databases">
        <authorList>
            <consortium name="The Salmonella enterica serovar Arizonae Genome Sequencing Project"/>
            <person name="McClelland M."/>
            <person name="Sanderson E.K."/>
            <person name="Porwollik S."/>
            <person name="Spieth J."/>
            <person name="Clifton W.S."/>
            <person name="Fulton R."/>
            <person name="Chunyan W."/>
            <person name="Wollam A."/>
            <person name="Shah N."/>
            <person name="Pepin K."/>
            <person name="Bhonagiri V."/>
            <person name="Nash W."/>
            <person name="Johnson M."/>
            <person name="Thiruvilangam P."/>
            <person name="Wilson R."/>
        </authorList>
    </citation>
    <scope>NUCLEOTIDE SEQUENCE [LARGE SCALE GENOMIC DNA]</scope>
    <source>
        <strain>ATCC BAA-731 / CDC346-86 / RSK2980</strain>
    </source>
</reference>
<keyword id="KW-0378">Hydrolase</keyword>
<keyword id="KW-1185">Reference proteome</keyword>
<organism>
    <name type="scientific">Salmonella arizonae (strain ATCC BAA-731 / CDC346-86 / RSK2980)</name>
    <dbReference type="NCBI Taxonomy" id="41514"/>
    <lineage>
        <taxon>Bacteria</taxon>
        <taxon>Pseudomonadati</taxon>
        <taxon>Pseudomonadota</taxon>
        <taxon>Gammaproteobacteria</taxon>
        <taxon>Enterobacterales</taxon>
        <taxon>Enterobacteriaceae</taxon>
        <taxon>Salmonella</taxon>
    </lineage>
</organism>
<sequence>MIDDDGYRPNVGIVICNRQGQVMWARRFGQHSWQFPQGGINPGESAEQAMYRELFEEVGLSRKDVRILASTRNWLRYKLPKRLVRWDTKPVCIGQKQKWFLLQLMSADAEINMQTSSTPEFDGWRWVSYWYPVRQVVSFKRDVYRRVMKEFASVVMALQDNTPKLQSAPAYRRKRG</sequence>
<feature type="chain" id="PRO_1000078974" description="RNA pyrophosphohydrolase">
    <location>
        <begin position="1"/>
        <end position="176"/>
    </location>
</feature>
<feature type="domain" description="Nudix hydrolase" evidence="1">
    <location>
        <begin position="6"/>
        <end position="149"/>
    </location>
</feature>
<feature type="short sequence motif" description="Nudix box">
    <location>
        <begin position="38"/>
        <end position="59"/>
    </location>
</feature>
<dbReference type="EC" id="3.6.1.-" evidence="1"/>
<dbReference type="EMBL" id="CP000880">
    <property type="protein sequence ID" value="ABX24422.1"/>
    <property type="molecule type" value="Genomic_DNA"/>
</dbReference>
<dbReference type="BMRB" id="A9MS78"/>
<dbReference type="SMR" id="A9MS78"/>
<dbReference type="STRING" id="41514.SARI_04655"/>
<dbReference type="KEGG" id="ses:SARI_04655"/>
<dbReference type="HOGENOM" id="CLU_087195_3_2_6"/>
<dbReference type="Proteomes" id="UP000002084">
    <property type="component" value="Chromosome"/>
</dbReference>
<dbReference type="GO" id="GO:0005737">
    <property type="term" value="C:cytoplasm"/>
    <property type="evidence" value="ECO:0007669"/>
    <property type="project" value="TreeGrafter"/>
</dbReference>
<dbReference type="GO" id="GO:0034353">
    <property type="term" value="F:mRNA 5'-diphosphatase activity"/>
    <property type="evidence" value="ECO:0007669"/>
    <property type="project" value="TreeGrafter"/>
</dbReference>
<dbReference type="GO" id="GO:0006402">
    <property type="term" value="P:mRNA catabolic process"/>
    <property type="evidence" value="ECO:0007669"/>
    <property type="project" value="TreeGrafter"/>
</dbReference>
<dbReference type="CDD" id="cd03671">
    <property type="entry name" value="NUDIX_Ap4A_hydrolase_plant_like"/>
    <property type="match status" value="1"/>
</dbReference>
<dbReference type="FunFam" id="3.90.79.10:FF:000001">
    <property type="entry name" value="RNA pyrophosphohydrolase"/>
    <property type="match status" value="1"/>
</dbReference>
<dbReference type="Gene3D" id="3.90.79.10">
    <property type="entry name" value="Nucleoside Triphosphate Pyrophosphohydrolase"/>
    <property type="match status" value="1"/>
</dbReference>
<dbReference type="HAMAP" id="MF_00298">
    <property type="entry name" value="Nudix_RppH"/>
    <property type="match status" value="1"/>
</dbReference>
<dbReference type="InterPro" id="IPR020476">
    <property type="entry name" value="Nudix_hydrolase"/>
</dbReference>
<dbReference type="InterPro" id="IPR015797">
    <property type="entry name" value="NUDIX_hydrolase-like_dom_sf"/>
</dbReference>
<dbReference type="InterPro" id="IPR020084">
    <property type="entry name" value="NUDIX_hydrolase_CS"/>
</dbReference>
<dbReference type="InterPro" id="IPR000086">
    <property type="entry name" value="NUDIX_hydrolase_dom"/>
</dbReference>
<dbReference type="InterPro" id="IPR022927">
    <property type="entry name" value="RppH"/>
</dbReference>
<dbReference type="NCBIfam" id="NF001934">
    <property type="entry name" value="PRK00714.1-1"/>
    <property type="match status" value="1"/>
</dbReference>
<dbReference type="NCBIfam" id="NF001937">
    <property type="entry name" value="PRK00714.1-4"/>
    <property type="match status" value="1"/>
</dbReference>
<dbReference type="NCBIfam" id="NF001938">
    <property type="entry name" value="PRK00714.1-5"/>
    <property type="match status" value="1"/>
</dbReference>
<dbReference type="PANTHER" id="PTHR23114">
    <property type="entry name" value="M7GPPPN-MRNA HYDROLASE"/>
    <property type="match status" value="1"/>
</dbReference>
<dbReference type="PANTHER" id="PTHR23114:SF17">
    <property type="entry name" value="M7GPPPN-MRNA HYDROLASE"/>
    <property type="match status" value="1"/>
</dbReference>
<dbReference type="Pfam" id="PF00293">
    <property type="entry name" value="NUDIX"/>
    <property type="match status" value="1"/>
</dbReference>
<dbReference type="PRINTS" id="PR00502">
    <property type="entry name" value="NUDIXFAMILY"/>
</dbReference>
<dbReference type="SUPFAM" id="SSF55811">
    <property type="entry name" value="Nudix"/>
    <property type="match status" value="1"/>
</dbReference>
<dbReference type="PROSITE" id="PS51462">
    <property type="entry name" value="NUDIX"/>
    <property type="match status" value="1"/>
</dbReference>
<dbReference type="PROSITE" id="PS00893">
    <property type="entry name" value="NUDIX_BOX"/>
    <property type="match status" value="1"/>
</dbReference>
<name>RPPH_SALAR</name>
<accession>A9MS78</accession>